<sequence length="219" mass="24506">MSTPLSQPAAASSSATHVTTKIAAKSDNNLVWLDMEMTGLSPENDRIIEVAMVVTDSELNVLAEGPVLVIHQPDEILDGMDAWNKGTHGRSGLIDKVKASTTTEAQAEADLLDFLKKWVPKSKSPMCGNSICQDRRFMARYMPKLEAYFHYRNLDVSTLKELCKRWQPAIAKGFIKRQQHTAYADIVESIEELRYYRQHFIRDVPQTPEAEALASSVAP</sequence>
<proteinExistence type="inferred from homology"/>
<dbReference type="EC" id="3.1.15.-" evidence="1"/>
<dbReference type="EMBL" id="AL646052">
    <property type="protein sequence ID" value="CAD14644.1"/>
    <property type="molecule type" value="Genomic_DNA"/>
</dbReference>
<dbReference type="RefSeq" id="WP_011000894.1">
    <property type="nucleotide sequence ID" value="NC_003295.1"/>
</dbReference>
<dbReference type="SMR" id="Q8Y0V1"/>
<dbReference type="STRING" id="267608.RSc0942"/>
<dbReference type="EnsemblBacteria" id="CAD14644">
    <property type="protein sequence ID" value="CAD14644"/>
    <property type="gene ID" value="RSc0942"/>
</dbReference>
<dbReference type="KEGG" id="rso:RSc0942"/>
<dbReference type="eggNOG" id="COG1949">
    <property type="taxonomic scope" value="Bacteria"/>
</dbReference>
<dbReference type="HOGENOM" id="CLU_064761_2_0_4"/>
<dbReference type="Proteomes" id="UP000001436">
    <property type="component" value="Chromosome"/>
</dbReference>
<dbReference type="GO" id="GO:0005737">
    <property type="term" value="C:cytoplasm"/>
    <property type="evidence" value="ECO:0007669"/>
    <property type="project" value="UniProtKB-SubCell"/>
</dbReference>
<dbReference type="GO" id="GO:0000175">
    <property type="term" value="F:3'-5'-RNA exonuclease activity"/>
    <property type="evidence" value="ECO:0007669"/>
    <property type="project" value="InterPro"/>
</dbReference>
<dbReference type="GO" id="GO:0003676">
    <property type="term" value="F:nucleic acid binding"/>
    <property type="evidence" value="ECO:0007669"/>
    <property type="project" value="InterPro"/>
</dbReference>
<dbReference type="GO" id="GO:0006259">
    <property type="term" value="P:DNA metabolic process"/>
    <property type="evidence" value="ECO:0007669"/>
    <property type="project" value="UniProtKB-ARBA"/>
</dbReference>
<dbReference type="CDD" id="cd06135">
    <property type="entry name" value="Orn"/>
    <property type="match status" value="1"/>
</dbReference>
<dbReference type="FunFam" id="3.30.420.10:FF:000003">
    <property type="entry name" value="Oligoribonuclease"/>
    <property type="match status" value="1"/>
</dbReference>
<dbReference type="Gene3D" id="3.30.420.10">
    <property type="entry name" value="Ribonuclease H-like superfamily/Ribonuclease H"/>
    <property type="match status" value="1"/>
</dbReference>
<dbReference type="HAMAP" id="MF_00045">
    <property type="entry name" value="Oligoribonuclease"/>
    <property type="match status" value="1"/>
</dbReference>
<dbReference type="InterPro" id="IPR013520">
    <property type="entry name" value="Exonuclease_RNaseT/DNA_pol3"/>
</dbReference>
<dbReference type="InterPro" id="IPR022894">
    <property type="entry name" value="Oligoribonuclease"/>
</dbReference>
<dbReference type="InterPro" id="IPR012337">
    <property type="entry name" value="RNaseH-like_sf"/>
</dbReference>
<dbReference type="InterPro" id="IPR036397">
    <property type="entry name" value="RNaseH_sf"/>
</dbReference>
<dbReference type="NCBIfam" id="NF003765">
    <property type="entry name" value="PRK05359.1"/>
    <property type="match status" value="1"/>
</dbReference>
<dbReference type="PANTHER" id="PTHR11046">
    <property type="entry name" value="OLIGORIBONUCLEASE, MITOCHONDRIAL"/>
    <property type="match status" value="1"/>
</dbReference>
<dbReference type="PANTHER" id="PTHR11046:SF0">
    <property type="entry name" value="OLIGORIBONUCLEASE, MITOCHONDRIAL"/>
    <property type="match status" value="1"/>
</dbReference>
<dbReference type="Pfam" id="PF00929">
    <property type="entry name" value="RNase_T"/>
    <property type="match status" value="1"/>
</dbReference>
<dbReference type="SMART" id="SM00479">
    <property type="entry name" value="EXOIII"/>
    <property type="match status" value="1"/>
</dbReference>
<dbReference type="SUPFAM" id="SSF53098">
    <property type="entry name" value="Ribonuclease H-like"/>
    <property type="match status" value="1"/>
</dbReference>
<reference key="1">
    <citation type="journal article" date="2002" name="Nature">
        <title>Genome sequence of the plant pathogen Ralstonia solanacearum.</title>
        <authorList>
            <person name="Salanoubat M."/>
            <person name="Genin S."/>
            <person name="Artiguenave F."/>
            <person name="Gouzy J."/>
            <person name="Mangenot S."/>
            <person name="Arlat M."/>
            <person name="Billault A."/>
            <person name="Brottier P."/>
            <person name="Camus J.-C."/>
            <person name="Cattolico L."/>
            <person name="Chandler M."/>
            <person name="Choisne N."/>
            <person name="Claudel-Renard C."/>
            <person name="Cunnac S."/>
            <person name="Demange N."/>
            <person name="Gaspin C."/>
            <person name="Lavie M."/>
            <person name="Moisan A."/>
            <person name="Robert C."/>
            <person name="Saurin W."/>
            <person name="Schiex T."/>
            <person name="Siguier P."/>
            <person name="Thebault P."/>
            <person name="Whalen M."/>
            <person name="Wincker P."/>
            <person name="Levy M."/>
            <person name="Weissenbach J."/>
            <person name="Boucher C.A."/>
        </authorList>
    </citation>
    <scope>NUCLEOTIDE SEQUENCE [LARGE SCALE GENOMIC DNA]</scope>
    <source>
        <strain>ATCC BAA-1114 / GMI1000</strain>
    </source>
</reference>
<evidence type="ECO:0000255" key="1">
    <source>
        <dbReference type="HAMAP-Rule" id="MF_00045"/>
    </source>
</evidence>
<gene>
    <name evidence="1" type="primary">orn</name>
    <name type="ordered locus">RSc0942</name>
    <name type="ORF">RS04464</name>
</gene>
<keyword id="KW-0963">Cytoplasm</keyword>
<keyword id="KW-0269">Exonuclease</keyword>
<keyword id="KW-0378">Hydrolase</keyword>
<keyword id="KW-0540">Nuclease</keyword>
<keyword id="KW-1185">Reference proteome</keyword>
<name>ORN_RALN1</name>
<protein>
    <recommendedName>
        <fullName evidence="1">Oligoribonuclease</fullName>
        <ecNumber evidence="1">3.1.15.-</ecNumber>
    </recommendedName>
</protein>
<comment type="function">
    <text evidence="1">3'-to-5' exoribonuclease specific for small oligoribonucleotides.</text>
</comment>
<comment type="subcellular location">
    <subcellularLocation>
        <location evidence="1">Cytoplasm</location>
    </subcellularLocation>
</comment>
<comment type="similarity">
    <text evidence="1">Belongs to the oligoribonuclease family.</text>
</comment>
<organism>
    <name type="scientific">Ralstonia nicotianae (strain ATCC BAA-1114 / GMI1000)</name>
    <name type="common">Ralstonia solanacearum</name>
    <dbReference type="NCBI Taxonomy" id="267608"/>
    <lineage>
        <taxon>Bacteria</taxon>
        <taxon>Pseudomonadati</taxon>
        <taxon>Pseudomonadota</taxon>
        <taxon>Betaproteobacteria</taxon>
        <taxon>Burkholderiales</taxon>
        <taxon>Burkholderiaceae</taxon>
        <taxon>Ralstonia</taxon>
        <taxon>Ralstonia solanacearum species complex</taxon>
    </lineage>
</organism>
<feature type="chain" id="PRO_0000111065" description="Oligoribonuclease">
    <location>
        <begin position="1"/>
        <end position="219"/>
    </location>
</feature>
<feature type="domain" description="Exonuclease" evidence="1">
    <location>
        <begin position="30"/>
        <end position="193"/>
    </location>
</feature>
<feature type="active site" evidence="1">
    <location>
        <position position="151"/>
    </location>
</feature>
<accession>Q8Y0V1</accession>